<protein>
    <recommendedName>
        <fullName evidence="1">1D-myo-inositol 2-acetamido-2-deoxy-alpha-D-glucopyranoside deacetylase 2</fullName>
        <shortName evidence="1">GlcNAc-Ins deacetylase 2</shortName>
        <ecNumber evidence="1">3.5.1.103</ecNumber>
    </recommendedName>
    <alternativeName>
        <fullName>N-acetyl-1-D-myo-inositol 2-amino-2-deoxy-alpha-D-glucopyranoside deacetylase 2</fullName>
    </alternativeName>
</protein>
<keyword id="KW-0378">Hydrolase</keyword>
<keyword id="KW-0479">Metal-binding</keyword>
<keyword id="KW-1185">Reference proteome</keyword>
<keyword id="KW-0862">Zinc</keyword>
<accession>Q2J678</accession>
<proteinExistence type="inferred from homology"/>
<reference key="1">
    <citation type="journal article" date="2007" name="Genome Res.">
        <title>Genome characteristics of facultatively symbiotic Frankia sp. strains reflect host range and host plant biogeography.</title>
        <authorList>
            <person name="Normand P."/>
            <person name="Lapierre P."/>
            <person name="Tisa L.S."/>
            <person name="Gogarten J.P."/>
            <person name="Alloisio N."/>
            <person name="Bagnarol E."/>
            <person name="Bassi C.A."/>
            <person name="Berry A.M."/>
            <person name="Bickhart D.M."/>
            <person name="Choisne N."/>
            <person name="Couloux A."/>
            <person name="Cournoyer B."/>
            <person name="Cruveiller S."/>
            <person name="Daubin V."/>
            <person name="Demange N."/>
            <person name="Francino M.P."/>
            <person name="Goltsman E."/>
            <person name="Huang Y."/>
            <person name="Kopp O.R."/>
            <person name="Labarre L."/>
            <person name="Lapidus A."/>
            <person name="Lavire C."/>
            <person name="Marechal J."/>
            <person name="Martinez M."/>
            <person name="Mastronunzio J.E."/>
            <person name="Mullin B.C."/>
            <person name="Niemann J."/>
            <person name="Pujic P."/>
            <person name="Rawnsley T."/>
            <person name="Rouy Z."/>
            <person name="Schenowitz C."/>
            <person name="Sellstedt A."/>
            <person name="Tavares F."/>
            <person name="Tomkins J.P."/>
            <person name="Vallenet D."/>
            <person name="Valverde C."/>
            <person name="Wall L.G."/>
            <person name="Wang Y."/>
            <person name="Medigue C."/>
            <person name="Benson D.R."/>
        </authorList>
    </citation>
    <scope>NUCLEOTIDE SEQUENCE [LARGE SCALE GENOMIC DNA]</scope>
    <source>
        <strain>DSM 45818 / CECT 9043 / HFP020203 / CcI3</strain>
    </source>
</reference>
<name>MSHB2_FRACC</name>
<comment type="function">
    <text evidence="1">Catalyzes the deacetylation of 1D-myo-inositol 2-acetamido-2-deoxy-alpha-D-glucopyranoside (GlcNAc-Ins) in the mycothiol biosynthesis pathway.</text>
</comment>
<comment type="catalytic activity">
    <reaction evidence="1">
        <text>1D-myo-inositol 2-acetamido-2-deoxy-alpha-D-glucopyranoside + H2O = 1D-myo-inositol 2-amino-2-deoxy-alpha-D-glucopyranoside + acetate</text>
        <dbReference type="Rhea" id="RHEA:26180"/>
        <dbReference type="ChEBI" id="CHEBI:15377"/>
        <dbReference type="ChEBI" id="CHEBI:30089"/>
        <dbReference type="ChEBI" id="CHEBI:52442"/>
        <dbReference type="ChEBI" id="CHEBI:58886"/>
        <dbReference type="EC" id="3.5.1.103"/>
    </reaction>
</comment>
<comment type="cofactor">
    <cofactor evidence="1">
        <name>Zn(2+)</name>
        <dbReference type="ChEBI" id="CHEBI:29105"/>
    </cofactor>
    <text evidence="1">Binds 1 zinc ion per subunit.</text>
</comment>
<comment type="similarity">
    <text evidence="1">Belongs to the MshB deacetylase family.</text>
</comment>
<evidence type="ECO:0000255" key="1">
    <source>
        <dbReference type="HAMAP-Rule" id="MF_01696"/>
    </source>
</evidence>
<organism>
    <name type="scientific">Frankia casuarinae (strain DSM 45818 / CECT 9043 / HFP020203 / CcI3)</name>
    <dbReference type="NCBI Taxonomy" id="106370"/>
    <lineage>
        <taxon>Bacteria</taxon>
        <taxon>Bacillati</taxon>
        <taxon>Actinomycetota</taxon>
        <taxon>Actinomycetes</taxon>
        <taxon>Frankiales</taxon>
        <taxon>Frankiaceae</taxon>
        <taxon>Frankia</taxon>
    </lineage>
</organism>
<gene>
    <name evidence="1" type="primary">mshB2</name>
    <name type="ordered locus">Francci3_3864</name>
</gene>
<sequence>MTTATPSSPSTAPLPTRRAMFVHAHPDDEVISTGIALASYAASPDTHVTLVTCTLGEEGEVLVPELIHLRADRGDQLGGYRIGELAGACAALGITDQRFLGGPGRWRDSGMIGTPANDHPRCLWRADLDEAAAELVRIVREVRPQVLVSYDARGGYGHPDHIRAHELTRRAFTDAADPSFAPQAGSVWQVAKRYETALARSSAVAGFEYFRDSAAESNPFAGLTSVDELGVTLVDDADITTELSAPHFFEAKIAAMRSHRTQMSVDGFFFALADGIGQRAWSVEHFVLAEGARGPGDGPDGRERDLFAGLVCEP</sequence>
<dbReference type="EC" id="3.5.1.103" evidence="1"/>
<dbReference type="EMBL" id="CP000249">
    <property type="protein sequence ID" value="ABD13214.1"/>
    <property type="molecule type" value="Genomic_DNA"/>
</dbReference>
<dbReference type="SMR" id="Q2J678"/>
<dbReference type="STRING" id="106370.Francci3_3864"/>
<dbReference type="KEGG" id="fra:Francci3_3864"/>
<dbReference type="eggNOG" id="COG2120">
    <property type="taxonomic scope" value="Bacteria"/>
</dbReference>
<dbReference type="HOGENOM" id="CLU_049311_2_1_11"/>
<dbReference type="PhylomeDB" id="Q2J678"/>
<dbReference type="Proteomes" id="UP000001937">
    <property type="component" value="Chromosome"/>
</dbReference>
<dbReference type="GO" id="GO:0035595">
    <property type="term" value="F:N-acetylglucosaminylinositol deacetylase activity"/>
    <property type="evidence" value="ECO:0007669"/>
    <property type="project" value="UniProtKB-EC"/>
</dbReference>
<dbReference type="GO" id="GO:0008270">
    <property type="term" value="F:zinc ion binding"/>
    <property type="evidence" value="ECO:0007669"/>
    <property type="project" value="UniProtKB-UniRule"/>
</dbReference>
<dbReference type="GO" id="GO:0010125">
    <property type="term" value="P:mycothiol biosynthetic process"/>
    <property type="evidence" value="ECO:0007669"/>
    <property type="project" value="UniProtKB-UniRule"/>
</dbReference>
<dbReference type="Gene3D" id="3.40.50.10320">
    <property type="entry name" value="LmbE-like"/>
    <property type="match status" value="1"/>
</dbReference>
<dbReference type="HAMAP" id="MF_01696">
    <property type="entry name" value="MshB"/>
    <property type="match status" value="1"/>
</dbReference>
<dbReference type="InterPro" id="IPR003737">
    <property type="entry name" value="GlcNAc_PI_deacetylase-related"/>
</dbReference>
<dbReference type="InterPro" id="IPR024078">
    <property type="entry name" value="LmbE-like_dom_sf"/>
</dbReference>
<dbReference type="InterPro" id="IPR017810">
    <property type="entry name" value="Mycothiol_biosynthesis_MshB"/>
</dbReference>
<dbReference type="NCBIfam" id="TIGR03445">
    <property type="entry name" value="mycothiol_MshB"/>
    <property type="match status" value="1"/>
</dbReference>
<dbReference type="PANTHER" id="PTHR12993:SF26">
    <property type="entry name" value="1D-MYO-INOSITOL 2-ACETAMIDO-2-DEOXY-ALPHA-D-GLUCOPYRANOSIDE DEACETYLASE"/>
    <property type="match status" value="1"/>
</dbReference>
<dbReference type="PANTHER" id="PTHR12993">
    <property type="entry name" value="N-ACETYLGLUCOSAMINYL-PHOSPHATIDYLINOSITOL DE-N-ACETYLASE-RELATED"/>
    <property type="match status" value="1"/>
</dbReference>
<dbReference type="Pfam" id="PF02585">
    <property type="entry name" value="PIG-L"/>
    <property type="match status" value="1"/>
</dbReference>
<dbReference type="SUPFAM" id="SSF102588">
    <property type="entry name" value="LmbE-like"/>
    <property type="match status" value="1"/>
</dbReference>
<feature type="chain" id="PRO_0000400186" description="1D-myo-inositol 2-acetamido-2-deoxy-alpha-D-glucopyranoside deacetylase 2">
    <location>
        <begin position="1"/>
        <end position="314"/>
    </location>
</feature>
<feature type="binding site" evidence="1">
    <location>
        <position position="25"/>
    </location>
    <ligand>
        <name>Zn(2+)</name>
        <dbReference type="ChEBI" id="CHEBI:29105"/>
    </ligand>
</feature>
<feature type="binding site" evidence="1">
    <location>
        <position position="28"/>
    </location>
    <ligand>
        <name>Zn(2+)</name>
        <dbReference type="ChEBI" id="CHEBI:29105"/>
    </ligand>
</feature>
<feature type="binding site" evidence="1">
    <location>
        <position position="161"/>
    </location>
    <ligand>
        <name>Zn(2+)</name>
        <dbReference type="ChEBI" id="CHEBI:29105"/>
    </ligand>
</feature>